<reference key="1">
    <citation type="journal article" date="2000" name="Biochem. Biophys. Res. Commun.">
        <title>Reciprocal expression of infant- and adult preferring transcripts of CDCrel-1 septin in the rat neocortex.</title>
        <authorList>
            <person name="Tada S."/>
            <person name="Kajii Y."/>
            <person name="Sato M."/>
            <person name="Nishikawa T."/>
        </authorList>
    </citation>
    <scope>NUCLEOTIDE SEQUENCE [MRNA] (ISOFORMS 1; 2 AND 3)</scope>
    <scope>TISSUE SPECIFICITY</scope>
    <source>
        <strain>Wistar</strain>
        <tissue>Neonatal brain</tissue>
    </source>
</reference>
<reference key="2">
    <citation type="submission" date="2007-04" db="UniProtKB">
        <authorList>
            <person name="Lubec G."/>
            <person name="Diao W."/>
        </authorList>
    </citation>
    <scope>PROTEIN SEQUENCE OF 23-36 AND 297-308</scope>
    <scope>IDENTIFICATION BY MASS SPECTROMETRY</scope>
    <source>
        <strain>Sprague-Dawley</strain>
        <tissue>Hippocampus</tissue>
    </source>
</reference>
<reference key="3">
    <citation type="journal article" date="2008" name="Neuroscience">
        <title>The Down syndrome candidate dual-specificity tyrosine phosphorylation-regulated kinase 1A phosphorylates the neurodegeneration-related septin 4.</title>
        <authorList>
            <person name="Sitz J.H."/>
            <person name="Baumgaertel K."/>
            <person name="Haemmerle B."/>
            <person name="Papadopoulos C."/>
            <person name="Hekerman P."/>
            <person name="Tejedor F.J."/>
            <person name="Becker W."/>
            <person name="Lutz B."/>
        </authorList>
    </citation>
    <scope>INTERACTION WITH DYRK1A</scope>
</reference>
<reference key="4">
    <citation type="journal article" date="2012" name="Nat. Commun.">
        <title>Quantitative maps of protein phosphorylation sites across 14 different rat organs and tissues.</title>
        <authorList>
            <person name="Lundby A."/>
            <person name="Secher A."/>
            <person name="Lage K."/>
            <person name="Nordsborg N.B."/>
            <person name="Dmytriyev A."/>
            <person name="Lundby C."/>
            <person name="Olsen J.V."/>
        </authorList>
    </citation>
    <scope>PHOSPHORYLATION [LARGE SCALE ANALYSIS] AT THR-13 AND SER-225</scope>
    <scope>IDENTIFICATION BY MASS SPECTROMETRY [LARGE SCALE ANALYSIS]</scope>
</reference>
<name>SEPT5_RAT</name>
<proteinExistence type="evidence at protein level"/>
<comment type="function">
    <text evidence="1 9">Filament-forming cytoskeletal GTPase (By similarity). May play a role in cytokinesis (Potential). May play a role in platelet secretion (By similarity).</text>
</comment>
<comment type="subunit">
    <text evidence="1 3 7">Septins polymerize into heterooligomeric protein complexes that form filaments, and can associate with cellular membranes, actin filaments and microtubules. GTPase activity is required for filament formation. Interacts with SEPTIN2 and SEPTIN5. In platelets, associated with a complex containing STX4. Interacts with PRKN; this interaction leads to SEPTIN5 ubiquitination and degradation (By similarity). Interacts with DYRK1A (PubMed:18938227). Interacts with STX1A; in the cerebellar cortex (By similarity).</text>
</comment>
<comment type="subcellular location">
    <subcellularLocation>
        <location evidence="1">Cytoplasm</location>
    </subcellularLocation>
    <subcellularLocation>
        <location evidence="1">Cytoplasm</location>
        <location evidence="1">Cytoskeleton</location>
    </subcellularLocation>
</comment>
<comment type="alternative products">
    <event type="alternative splicing"/>
    <isoform>
        <id>Q9JJM9-1</id>
        <name>1</name>
        <name>CDCrel-1F</name>
        <sequence type="displayed"/>
    </isoform>
    <isoform>
        <id>Q9JJM9-2</id>
        <name>2</name>
        <name>CDCrel-1A</name>
        <sequence type="described" ref="VSP_016539"/>
    </isoform>
    <isoform>
        <id>Q9JJM9-3</id>
        <name>3</name>
        <name>CDCrel-1AI</name>
        <sequence type="described" ref="VSP_016540 VSP_016541"/>
    </isoform>
</comment>
<comment type="tissue specificity">
    <text evidence="6">Expressed in brain and testis and at lower level in heart, spleen, lung and kidney.</text>
</comment>
<comment type="PTM">
    <text evidence="3">Phosphorylated by DYRK1A.</text>
</comment>
<comment type="similarity">
    <text evidence="5">Belongs to the TRAFAC class TrmE-Era-EngA-EngB-Septin-like GTPase superfamily. Septin GTPase family.</text>
</comment>
<dbReference type="EMBL" id="AB027143">
    <property type="protein sequence ID" value="BAA98051.1"/>
    <property type="molecule type" value="mRNA"/>
</dbReference>
<dbReference type="EMBL" id="AB027144">
    <property type="protein sequence ID" value="BAB87114.1"/>
    <property type="molecule type" value="mRNA"/>
</dbReference>
<dbReference type="EMBL" id="AB027145">
    <property type="protein sequence ID" value="BAA98052.1"/>
    <property type="molecule type" value="mRNA"/>
</dbReference>
<dbReference type="SMR" id="Q9JJM9"/>
<dbReference type="BioGRID" id="250595">
    <property type="interactions" value="6"/>
</dbReference>
<dbReference type="CORUM" id="Q9JJM9"/>
<dbReference type="FunCoup" id="Q9JJM9">
    <property type="interactions" value="1064"/>
</dbReference>
<dbReference type="IntAct" id="Q9JJM9">
    <property type="interactions" value="4"/>
</dbReference>
<dbReference type="MINT" id="Q9JJM9"/>
<dbReference type="STRING" id="10116.ENSRNOP00000039995"/>
<dbReference type="GlyGen" id="Q9JJM9">
    <property type="glycosylation" value="2 sites, 1 O-linked glycan (1 site)"/>
</dbReference>
<dbReference type="iPTMnet" id="Q9JJM9"/>
<dbReference type="PhosphoSitePlus" id="Q9JJM9"/>
<dbReference type="jPOST" id="Q9JJM9"/>
<dbReference type="PaxDb" id="10116-ENSRNOP00000039995"/>
<dbReference type="AGR" id="RGD:621763"/>
<dbReference type="RGD" id="621763">
    <property type="gene designation" value="Septin5"/>
</dbReference>
<dbReference type="eggNOG" id="KOG2655">
    <property type="taxonomic scope" value="Eukaryota"/>
</dbReference>
<dbReference type="InParanoid" id="Q9JJM9"/>
<dbReference type="PRO" id="PR:Q9JJM9"/>
<dbReference type="Proteomes" id="UP000002494">
    <property type="component" value="Unplaced"/>
</dbReference>
<dbReference type="GO" id="GO:0043679">
    <property type="term" value="C:axon terminus"/>
    <property type="evidence" value="ECO:0000266"/>
    <property type="project" value="RGD"/>
</dbReference>
<dbReference type="GO" id="GO:0044305">
    <property type="term" value="C:calyx of Held"/>
    <property type="evidence" value="ECO:0000266"/>
    <property type="project" value="RGD"/>
</dbReference>
<dbReference type="GO" id="GO:0005938">
    <property type="term" value="C:cell cortex"/>
    <property type="evidence" value="ECO:0000266"/>
    <property type="project" value="RGD"/>
</dbReference>
<dbReference type="GO" id="GO:0032153">
    <property type="term" value="C:cell division site"/>
    <property type="evidence" value="ECO:0000318"/>
    <property type="project" value="GO_Central"/>
</dbReference>
<dbReference type="GO" id="GO:0032154">
    <property type="term" value="C:cleavage furrow"/>
    <property type="evidence" value="ECO:0000314"/>
    <property type="project" value="UniProtKB"/>
</dbReference>
<dbReference type="GO" id="GO:0015630">
    <property type="term" value="C:microtubule cytoskeleton"/>
    <property type="evidence" value="ECO:0000318"/>
    <property type="project" value="GO_Central"/>
</dbReference>
<dbReference type="GO" id="GO:0005886">
    <property type="term" value="C:plasma membrane"/>
    <property type="evidence" value="ECO:0000250"/>
    <property type="project" value="UniProtKB"/>
</dbReference>
<dbReference type="GO" id="GO:0098793">
    <property type="term" value="C:presynapse"/>
    <property type="evidence" value="ECO:0000266"/>
    <property type="project" value="RGD"/>
</dbReference>
<dbReference type="GO" id="GO:0031105">
    <property type="term" value="C:septin complex"/>
    <property type="evidence" value="ECO:0000314"/>
    <property type="project" value="UniProtKB"/>
</dbReference>
<dbReference type="GO" id="GO:0005940">
    <property type="term" value="C:septin ring"/>
    <property type="evidence" value="ECO:0000318"/>
    <property type="project" value="GO_Central"/>
</dbReference>
<dbReference type="GO" id="GO:0001725">
    <property type="term" value="C:stress fiber"/>
    <property type="evidence" value="ECO:0000314"/>
    <property type="project" value="UniProtKB"/>
</dbReference>
<dbReference type="GO" id="GO:0045202">
    <property type="term" value="C:synapse"/>
    <property type="evidence" value="ECO:0000266"/>
    <property type="project" value="RGD"/>
</dbReference>
<dbReference type="GO" id="GO:0008021">
    <property type="term" value="C:synaptic vesicle"/>
    <property type="evidence" value="ECO:0000314"/>
    <property type="project" value="RGD"/>
</dbReference>
<dbReference type="GO" id="GO:0043195">
    <property type="term" value="C:terminal bouton"/>
    <property type="evidence" value="ECO:0007005"/>
    <property type="project" value="ParkinsonsUK-UCL"/>
</dbReference>
<dbReference type="GO" id="GO:0019003">
    <property type="term" value="F:GDP binding"/>
    <property type="evidence" value="ECO:0000314"/>
    <property type="project" value="UniProtKB"/>
</dbReference>
<dbReference type="GO" id="GO:0005525">
    <property type="term" value="F:GTP binding"/>
    <property type="evidence" value="ECO:0000314"/>
    <property type="project" value="UniProtKB"/>
</dbReference>
<dbReference type="GO" id="GO:0003924">
    <property type="term" value="F:GTPase activity"/>
    <property type="evidence" value="ECO:0000318"/>
    <property type="project" value="GO_Central"/>
</dbReference>
<dbReference type="GO" id="GO:0042802">
    <property type="term" value="F:identical protein binding"/>
    <property type="evidence" value="ECO:0000266"/>
    <property type="project" value="RGD"/>
</dbReference>
<dbReference type="GO" id="GO:0060090">
    <property type="term" value="F:molecular adaptor activity"/>
    <property type="evidence" value="ECO:0000318"/>
    <property type="project" value="GO_Central"/>
</dbReference>
<dbReference type="GO" id="GO:0035091">
    <property type="term" value="F:phosphatidylinositol binding"/>
    <property type="evidence" value="ECO:0000314"/>
    <property type="project" value="UniProtKB"/>
</dbReference>
<dbReference type="GO" id="GO:0042803">
    <property type="term" value="F:protein homodimerization activity"/>
    <property type="evidence" value="ECO:0000353"/>
    <property type="project" value="UniProtKB"/>
</dbReference>
<dbReference type="GO" id="GO:0019905">
    <property type="term" value="F:syntaxin binding"/>
    <property type="evidence" value="ECO:0000314"/>
    <property type="project" value="RGD"/>
</dbReference>
<dbReference type="GO" id="GO:0030534">
    <property type="term" value="P:adult behavior"/>
    <property type="evidence" value="ECO:0000250"/>
    <property type="project" value="UniProtKB"/>
</dbReference>
<dbReference type="GO" id="GO:0061640">
    <property type="term" value="P:cytoskeleton-dependent cytokinesis"/>
    <property type="evidence" value="ECO:0000318"/>
    <property type="project" value="GO_Central"/>
</dbReference>
<dbReference type="GO" id="GO:0045921">
    <property type="term" value="P:positive regulation of exocytosis"/>
    <property type="evidence" value="ECO:0000315"/>
    <property type="project" value="RGD"/>
</dbReference>
<dbReference type="GO" id="GO:0008104">
    <property type="term" value="P:protein localization"/>
    <property type="evidence" value="ECO:0000318"/>
    <property type="project" value="GO_Central"/>
</dbReference>
<dbReference type="GO" id="GO:0017157">
    <property type="term" value="P:regulation of exocytosis"/>
    <property type="evidence" value="ECO:0000250"/>
    <property type="project" value="UniProtKB"/>
</dbReference>
<dbReference type="GO" id="GO:0099148">
    <property type="term" value="P:regulation of synaptic vesicle docking"/>
    <property type="evidence" value="ECO:0000266"/>
    <property type="project" value="RGD"/>
</dbReference>
<dbReference type="GO" id="GO:0035176">
    <property type="term" value="P:social behavior"/>
    <property type="evidence" value="ECO:0000250"/>
    <property type="project" value="UniProtKB"/>
</dbReference>
<dbReference type="CDD" id="cd01850">
    <property type="entry name" value="CDC_Septin"/>
    <property type="match status" value="1"/>
</dbReference>
<dbReference type="FunFam" id="3.40.50.300:FF:000064">
    <property type="entry name" value="Septin 4"/>
    <property type="match status" value="1"/>
</dbReference>
<dbReference type="Gene3D" id="3.40.50.300">
    <property type="entry name" value="P-loop containing nucleotide triphosphate hydrolases"/>
    <property type="match status" value="1"/>
</dbReference>
<dbReference type="InterPro" id="IPR030379">
    <property type="entry name" value="G_SEPTIN_dom"/>
</dbReference>
<dbReference type="InterPro" id="IPR027417">
    <property type="entry name" value="P-loop_NTPase"/>
</dbReference>
<dbReference type="InterPro" id="IPR016491">
    <property type="entry name" value="Septin"/>
</dbReference>
<dbReference type="PANTHER" id="PTHR18884">
    <property type="entry name" value="SEPTIN"/>
    <property type="match status" value="1"/>
</dbReference>
<dbReference type="Pfam" id="PF00735">
    <property type="entry name" value="Septin"/>
    <property type="match status" value="1"/>
</dbReference>
<dbReference type="PIRSF" id="PIRSF006698">
    <property type="entry name" value="Septin"/>
    <property type="match status" value="1"/>
</dbReference>
<dbReference type="SUPFAM" id="SSF52540">
    <property type="entry name" value="P-loop containing nucleoside triphosphate hydrolases"/>
    <property type="match status" value="1"/>
</dbReference>
<dbReference type="PROSITE" id="PS51719">
    <property type="entry name" value="G_SEPTIN"/>
    <property type="match status" value="1"/>
</dbReference>
<feature type="chain" id="PRO_0000173524" description="Septin-5">
    <location>
        <begin position="1"/>
        <end position="369"/>
    </location>
</feature>
<feature type="domain" description="Septin-type G" evidence="5">
    <location>
        <begin position="41"/>
        <end position="314"/>
    </location>
</feature>
<feature type="region of interest" description="G1 motif" evidence="5">
    <location>
        <begin position="51"/>
        <end position="58"/>
    </location>
</feature>
<feature type="region of interest" description="G3 motif" evidence="5">
    <location>
        <begin position="108"/>
        <end position="111"/>
    </location>
</feature>
<feature type="region of interest" description="G4 motif" evidence="5">
    <location>
        <begin position="189"/>
        <end position="192"/>
    </location>
</feature>
<feature type="coiled-coil region" evidence="4">
    <location>
        <begin position="338"/>
        <end position="369"/>
    </location>
</feature>
<feature type="binding site" evidence="1">
    <location>
        <begin position="51"/>
        <end position="58"/>
    </location>
    <ligand>
        <name>GTP</name>
        <dbReference type="ChEBI" id="CHEBI:37565"/>
    </ligand>
</feature>
<feature type="binding site" evidence="1">
    <location>
        <position position="85"/>
    </location>
    <ligand>
        <name>GTP</name>
        <dbReference type="ChEBI" id="CHEBI:37565"/>
    </ligand>
</feature>
<feature type="binding site" evidence="1">
    <location>
        <position position="111"/>
    </location>
    <ligand>
        <name>GTP</name>
        <dbReference type="ChEBI" id="CHEBI:37565"/>
    </ligand>
</feature>
<feature type="binding site" evidence="1">
    <location>
        <begin position="190"/>
        <end position="198"/>
    </location>
    <ligand>
        <name>GTP</name>
        <dbReference type="ChEBI" id="CHEBI:37565"/>
    </ligand>
</feature>
<feature type="binding site" evidence="1">
    <location>
        <position position="248"/>
    </location>
    <ligand>
        <name>GTP</name>
        <dbReference type="ChEBI" id="CHEBI:37565"/>
    </ligand>
</feature>
<feature type="binding site" evidence="1">
    <location>
        <position position="263"/>
    </location>
    <ligand>
        <name>GTP</name>
        <dbReference type="ChEBI" id="CHEBI:37565"/>
    </ligand>
</feature>
<feature type="modified residue" description="Phosphothreonine" evidence="11">
    <location>
        <position position="13"/>
    </location>
</feature>
<feature type="modified residue" description="Omega-N-methylarginine" evidence="3">
    <location>
        <position position="168"/>
    </location>
</feature>
<feature type="modified residue" description="Phosphoserine" evidence="11">
    <location>
        <position position="225"/>
    </location>
</feature>
<feature type="modified residue" description="Phosphoserine" evidence="2">
    <location>
        <position position="327"/>
    </location>
</feature>
<feature type="modified residue" description="Phosphothreonine" evidence="3">
    <location>
        <position position="336"/>
    </location>
</feature>
<feature type="splice variant" id="VSP_016539" description="In isoform 2." evidence="8">
    <original>MSTGLRYKSKLATPEDKQ</original>
    <variation>MDSLAAPQDRLVEQLLSPRTQAQRRLK</variation>
    <location>
        <begin position="1"/>
        <end position="18"/>
    </location>
</feature>
<feature type="splice variant" id="VSP_016540" description="In isoform 3." evidence="8">
    <original>LRRMQ</original>
    <variation>GRAGR</variation>
    <location>
        <begin position="352"/>
        <end position="356"/>
    </location>
</feature>
<feature type="splice variant" id="VSP_016541" description="In isoform 3." evidence="8">
    <location>
        <begin position="357"/>
        <end position="369"/>
    </location>
</feature>
<organism>
    <name type="scientific">Rattus norvegicus</name>
    <name type="common">Rat</name>
    <dbReference type="NCBI Taxonomy" id="10116"/>
    <lineage>
        <taxon>Eukaryota</taxon>
        <taxon>Metazoa</taxon>
        <taxon>Chordata</taxon>
        <taxon>Craniata</taxon>
        <taxon>Vertebrata</taxon>
        <taxon>Euteleostomi</taxon>
        <taxon>Mammalia</taxon>
        <taxon>Eutheria</taxon>
        <taxon>Euarchontoglires</taxon>
        <taxon>Glires</taxon>
        <taxon>Rodentia</taxon>
        <taxon>Myomorpha</taxon>
        <taxon>Muroidea</taxon>
        <taxon>Muridae</taxon>
        <taxon>Murinae</taxon>
        <taxon>Rattus</taxon>
    </lineage>
</organism>
<accession>Q9JJM9</accession>
<accession>Q8R2F7</accession>
<accession>Q9JJM8</accession>
<protein>
    <recommendedName>
        <fullName>Septin-5</fullName>
    </recommendedName>
    <alternativeName>
        <fullName>Cell division control-related protein 1</fullName>
        <shortName>CDCrel-1</shortName>
    </alternativeName>
    <alternativeName>
        <fullName>Peanut-like protein 1</fullName>
    </alternativeName>
</protein>
<keyword id="KW-0025">Alternative splicing</keyword>
<keyword id="KW-0131">Cell cycle</keyword>
<keyword id="KW-0132">Cell division</keyword>
<keyword id="KW-0175">Coiled coil</keyword>
<keyword id="KW-0963">Cytoplasm</keyword>
<keyword id="KW-0206">Cytoskeleton</keyword>
<keyword id="KW-0903">Direct protein sequencing</keyword>
<keyword id="KW-0342">GTP-binding</keyword>
<keyword id="KW-0488">Methylation</keyword>
<keyword id="KW-0547">Nucleotide-binding</keyword>
<keyword id="KW-0597">Phosphoprotein</keyword>
<keyword id="KW-1185">Reference proteome</keyword>
<evidence type="ECO:0000250" key="1"/>
<evidence type="ECO:0000250" key="2">
    <source>
        <dbReference type="UniProtKB" id="Q99719"/>
    </source>
</evidence>
<evidence type="ECO:0000250" key="3">
    <source>
        <dbReference type="UniProtKB" id="Q9Z2Q6"/>
    </source>
</evidence>
<evidence type="ECO:0000255" key="4"/>
<evidence type="ECO:0000255" key="5">
    <source>
        <dbReference type="PROSITE-ProRule" id="PRU01056"/>
    </source>
</evidence>
<evidence type="ECO:0000269" key="6">
    <source>
    </source>
</evidence>
<evidence type="ECO:0000269" key="7">
    <source>
    </source>
</evidence>
<evidence type="ECO:0000303" key="8">
    <source>
    </source>
</evidence>
<evidence type="ECO:0000305" key="9"/>
<evidence type="ECO:0000312" key="10">
    <source>
        <dbReference type="RGD" id="621763"/>
    </source>
</evidence>
<evidence type="ECO:0007744" key="11">
    <source>
    </source>
</evidence>
<sequence length="369" mass="42852">MSTGLRYKSKLATPEDKQDIDKQYVGFATLPNQVHRKSVKKGFDFTLMVAGESGLGKSTLVHSLFLTDLYKDRKLLSAEERINQTVEILKHTVDIEEKGVKLKLTIVDTPGFGDAVNNFECWKPITDYVDQQFEQYFRDESGLNRKNIQDNRVHCCLYFISPFGHGLRPVDVGFMKALHEKVNIVPLIAKADCLVPSEIRKLKDRIREEIDKFGIHVYQFPECDSDEDEDFKQQDRELKESAPFAVIGSNTVVEAKGQRVRGRLYPWGIVEVENQAHCDFVKLRNMLIRTHMHDLKDVTCDVHYENYRAHCIQQMTSKLTQDSRMESPIPILPLPTPDSETEKLIRMKDEELRRMQEMLQKMKQRMQDQ</sequence>
<gene>
    <name evidence="2" type="primary">Septin5</name>
    <name type="synonym">Pnutl1</name>
    <name evidence="10" type="synonym">Sept5</name>
</gene>